<gene>
    <name type="primary">Morn1</name>
</gene>
<keyword id="KW-0597">Phosphoprotein</keyword>
<keyword id="KW-1185">Reference proteome</keyword>
<keyword id="KW-0677">Repeat</keyword>
<evidence type="ECO:0000256" key="1">
    <source>
        <dbReference type="SAM" id="MobiDB-lite"/>
    </source>
</evidence>
<evidence type="ECO:0007744" key="2">
    <source>
    </source>
</evidence>
<dbReference type="EMBL" id="BC082091">
    <property type="protein sequence ID" value="AAH82091.1"/>
    <property type="molecule type" value="mRNA"/>
</dbReference>
<dbReference type="RefSeq" id="NP_001005544.1">
    <property type="nucleotide sequence ID" value="NM_001005544.1"/>
</dbReference>
<dbReference type="SMR" id="Q641X6"/>
<dbReference type="FunCoup" id="Q641X6">
    <property type="interactions" value="302"/>
</dbReference>
<dbReference type="STRING" id="10116.ENSRNOP00000019930"/>
<dbReference type="iPTMnet" id="Q641X6"/>
<dbReference type="PhosphoSitePlus" id="Q641X6"/>
<dbReference type="PaxDb" id="10116-ENSRNOP00000019930"/>
<dbReference type="Ensembl" id="ENSRNOT00000019930.6">
    <property type="protein sequence ID" value="ENSRNOP00000019930.4"/>
    <property type="gene ID" value="ENSRNOG00000014642.7"/>
</dbReference>
<dbReference type="GeneID" id="298676"/>
<dbReference type="KEGG" id="rno:298676"/>
<dbReference type="AGR" id="RGD:1359433"/>
<dbReference type="CTD" id="79906"/>
<dbReference type="RGD" id="1359433">
    <property type="gene designation" value="Morn1"/>
</dbReference>
<dbReference type="eggNOG" id="KOG0231">
    <property type="taxonomic scope" value="Eukaryota"/>
</dbReference>
<dbReference type="GeneTree" id="ENSGT00940000161806"/>
<dbReference type="HOGENOM" id="CLU_031327_0_0_1"/>
<dbReference type="InParanoid" id="Q641X6"/>
<dbReference type="OMA" id="GEYVIMI"/>
<dbReference type="PhylomeDB" id="Q641X6"/>
<dbReference type="PRO" id="PR:Q641X6"/>
<dbReference type="Proteomes" id="UP000002494">
    <property type="component" value="Chromosome 5"/>
</dbReference>
<dbReference type="Bgee" id="ENSRNOG00000014642">
    <property type="expression patterns" value="Expressed in testis and 19 other cell types or tissues"/>
</dbReference>
<dbReference type="Gene3D" id="2.20.110.10">
    <property type="entry name" value="Histone H3 K4-specific methyltransferase SET7/9 N-terminal domain"/>
    <property type="match status" value="3"/>
</dbReference>
<dbReference type="InterPro" id="IPR003409">
    <property type="entry name" value="MORN"/>
</dbReference>
<dbReference type="PANTHER" id="PTHR23084:SF263">
    <property type="entry name" value="MORN REPEAT-CONTAINING PROTEIN 1"/>
    <property type="match status" value="1"/>
</dbReference>
<dbReference type="PANTHER" id="PTHR23084">
    <property type="entry name" value="PHOSPHATIDYLINOSITOL-4-PHOSPHATE 5-KINASE RELATED"/>
    <property type="match status" value="1"/>
</dbReference>
<dbReference type="Pfam" id="PF02493">
    <property type="entry name" value="MORN"/>
    <property type="match status" value="8"/>
</dbReference>
<dbReference type="SMART" id="SM00698">
    <property type="entry name" value="MORN"/>
    <property type="match status" value="7"/>
</dbReference>
<dbReference type="SUPFAM" id="SSF82185">
    <property type="entry name" value="Histone H3 K4-specific methyltransferase SET7/9 N-terminal domain"/>
    <property type="match status" value="2"/>
</dbReference>
<protein>
    <recommendedName>
        <fullName>MORN repeat-containing protein 1</fullName>
    </recommendedName>
</protein>
<name>MORN1_RAT</name>
<organism>
    <name type="scientific">Rattus norvegicus</name>
    <name type="common">Rat</name>
    <dbReference type="NCBI Taxonomy" id="10116"/>
    <lineage>
        <taxon>Eukaryota</taxon>
        <taxon>Metazoa</taxon>
        <taxon>Chordata</taxon>
        <taxon>Craniata</taxon>
        <taxon>Vertebrata</taxon>
        <taxon>Euteleostomi</taxon>
        <taxon>Mammalia</taxon>
        <taxon>Eutheria</taxon>
        <taxon>Euarchontoglires</taxon>
        <taxon>Glires</taxon>
        <taxon>Rodentia</taxon>
        <taxon>Myomorpha</taxon>
        <taxon>Muroidea</taxon>
        <taxon>Muridae</taxon>
        <taxon>Murinae</taxon>
        <taxon>Rattus</taxon>
    </lineage>
</organism>
<feature type="chain" id="PRO_0000247455" description="MORN repeat-containing protein 1">
    <location>
        <begin position="1"/>
        <end position="483"/>
    </location>
</feature>
<feature type="repeat" description="MORN 1">
    <location>
        <begin position="39"/>
        <end position="61"/>
    </location>
</feature>
<feature type="repeat" description="MORN 2">
    <location>
        <begin position="62"/>
        <end position="84"/>
    </location>
</feature>
<feature type="repeat" description="MORN 3">
    <location>
        <begin position="86"/>
        <end position="108"/>
    </location>
</feature>
<feature type="repeat" description="MORN 4">
    <location>
        <begin position="109"/>
        <end position="131"/>
    </location>
</feature>
<feature type="repeat" description="MORN 5">
    <location>
        <begin position="132"/>
        <end position="154"/>
    </location>
</feature>
<feature type="repeat" description="MORN 6">
    <location>
        <begin position="155"/>
        <end position="177"/>
    </location>
</feature>
<feature type="repeat" description="MORN 7">
    <location>
        <begin position="178"/>
        <end position="200"/>
    </location>
</feature>
<feature type="region of interest" description="Disordered" evidence="1">
    <location>
        <begin position="392"/>
        <end position="427"/>
    </location>
</feature>
<feature type="compositionally biased region" description="Basic and acidic residues" evidence="1">
    <location>
        <begin position="394"/>
        <end position="404"/>
    </location>
</feature>
<feature type="compositionally biased region" description="Polar residues" evidence="1">
    <location>
        <begin position="418"/>
        <end position="427"/>
    </location>
</feature>
<feature type="modified residue" description="Phosphoserine" evidence="2">
    <location>
        <position position="18"/>
    </location>
</feature>
<feature type="modified residue" description="Phosphoserine" evidence="2">
    <location>
        <position position="403"/>
    </location>
</feature>
<proteinExistence type="evidence at protein level"/>
<reference key="1">
    <citation type="journal article" date="2004" name="Genome Res.">
        <title>The status, quality, and expansion of the NIH full-length cDNA project: the Mammalian Gene Collection (MGC).</title>
        <authorList>
            <consortium name="The MGC Project Team"/>
        </authorList>
    </citation>
    <scope>NUCLEOTIDE SEQUENCE [LARGE SCALE MRNA]</scope>
    <source>
        <tissue>Testis</tissue>
    </source>
</reference>
<reference key="2">
    <citation type="journal article" date="2012" name="Nat. Commun.">
        <title>Quantitative maps of protein phosphorylation sites across 14 different rat organs and tissues.</title>
        <authorList>
            <person name="Lundby A."/>
            <person name="Secher A."/>
            <person name="Lage K."/>
            <person name="Nordsborg N.B."/>
            <person name="Dmytriyev A."/>
            <person name="Lundby C."/>
            <person name="Olsen J.V."/>
        </authorList>
    </citation>
    <scope>PHOSPHORYLATION [LARGE SCALE ANALYSIS] AT SER-18 AND SER-403</scope>
    <scope>IDENTIFICATION BY MASS SPECTROMETRY [LARGE SCALE ANALYSIS]</scope>
</reference>
<sequence>MAAAEDQNPASLQPLRHSPRLRPRNGYGVYVYPNSFFRYEGEWKGGKKHGHGKLLFKDGSYYEGEFVNGEITGEGYQHWAWSGNTYSGQFVLGEPQGHGIMKYKAGGHYEGELSQGLREGQGFLEDQDGQVYQGSFHDNKRHGRGQMVFKNGDKYEGDWVRDQRQGHGVLFCADGSTYKGQWHNDVFSGLGSLVHCSGVTYCGMFINGHPAAQAKKIVVLGPELLEVVQGSPFTLSVQLQQDDGEVAKSESGRVLKISAGVRYVQLPEYSEVSFFKMDDAHMETPIQTPFGFQCIPYPLSVSTSWGLEPGSTVESARADLLLSKKDSEPVLDSEAFHGKGDTLSILPARRHEPCCSAAYQRVDQGCAEFVDIHLGAPPPGMQPYLFLPSMLEKAGNRPKGDRSPPEVLSTAQEPLRGTNRSDGTTAEPSTAAYLGEYVLMVCDVTSPPFLGHRLPTTFKHLRILARGDIHLPHVPEDHPEALS</sequence>
<accession>Q641X6</accession>